<organism>
    <name type="scientific">Xanthomonas campestris pv. campestris (strain ATCC 33913 / DSM 3586 / NCPPB 528 / LMG 568 / P 25)</name>
    <dbReference type="NCBI Taxonomy" id="190485"/>
    <lineage>
        <taxon>Bacteria</taxon>
        <taxon>Pseudomonadati</taxon>
        <taxon>Pseudomonadota</taxon>
        <taxon>Gammaproteobacteria</taxon>
        <taxon>Lysobacterales</taxon>
        <taxon>Lysobacteraceae</taxon>
        <taxon>Xanthomonas</taxon>
    </lineage>
</organism>
<protein>
    <recommendedName>
        <fullName evidence="1">Putative 3-methyladenine DNA glycosylase</fullName>
        <ecNumber evidence="1">3.2.2.-</ecNumber>
    </recommendedName>
</protein>
<name>3MGH_XANCP</name>
<proteinExistence type="inferred from homology"/>
<accession>Q8P8C7</accession>
<evidence type="ECO:0000255" key="1">
    <source>
        <dbReference type="HAMAP-Rule" id="MF_00527"/>
    </source>
</evidence>
<reference key="1">
    <citation type="journal article" date="2002" name="Nature">
        <title>Comparison of the genomes of two Xanthomonas pathogens with differing host specificities.</title>
        <authorList>
            <person name="da Silva A.C.R."/>
            <person name="Ferro J.A."/>
            <person name="Reinach F.C."/>
            <person name="Farah C.S."/>
            <person name="Furlan L.R."/>
            <person name="Quaggio R.B."/>
            <person name="Monteiro-Vitorello C.B."/>
            <person name="Van Sluys M.A."/>
            <person name="Almeida N.F. Jr."/>
            <person name="Alves L.M.C."/>
            <person name="do Amaral A.M."/>
            <person name="Bertolini M.C."/>
            <person name="Camargo L.E.A."/>
            <person name="Camarotte G."/>
            <person name="Cannavan F."/>
            <person name="Cardozo J."/>
            <person name="Chambergo F."/>
            <person name="Ciapina L.P."/>
            <person name="Cicarelli R.M.B."/>
            <person name="Coutinho L.L."/>
            <person name="Cursino-Santos J.R."/>
            <person name="El-Dorry H."/>
            <person name="Faria J.B."/>
            <person name="Ferreira A.J.S."/>
            <person name="Ferreira R.C.C."/>
            <person name="Ferro M.I.T."/>
            <person name="Formighieri E.F."/>
            <person name="Franco M.C."/>
            <person name="Greggio C.C."/>
            <person name="Gruber A."/>
            <person name="Katsuyama A.M."/>
            <person name="Kishi L.T."/>
            <person name="Leite R.P."/>
            <person name="Lemos E.G.M."/>
            <person name="Lemos M.V.F."/>
            <person name="Locali E.C."/>
            <person name="Machado M.A."/>
            <person name="Madeira A.M.B.N."/>
            <person name="Martinez-Rossi N.M."/>
            <person name="Martins E.C."/>
            <person name="Meidanis J."/>
            <person name="Menck C.F.M."/>
            <person name="Miyaki C.Y."/>
            <person name="Moon D.H."/>
            <person name="Moreira L.M."/>
            <person name="Novo M.T.M."/>
            <person name="Okura V.K."/>
            <person name="Oliveira M.C."/>
            <person name="Oliveira V.R."/>
            <person name="Pereira H.A."/>
            <person name="Rossi A."/>
            <person name="Sena J.A.D."/>
            <person name="Silva C."/>
            <person name="de Souza R.F."/>
            <person name="Spinola L.A.F."/>
            <person name="Takita M.A."/>
            <person name="Tamura R.E."/>
            <person name="Teixeira E.C."/>
            <person name="Tezza R.I.D."/>
            <person name="Trindade dos Santos M."/>
            <person name="Truffi D."/>
            <person name="Tsai S.M."/>
            <person name="White F.F."/>
            <person name="Setubal J.C."/>
            <person name="Kitajima J.P."/>
        </authorList>
    </citation>
    <scope>NUCLEOTIDE SEQUENCE [LARGE SCALE GENOMIC DNA]</scope>
    <source>
        <strain>ATCC 33913 / DSM 3586 / NCPPB 528 / LMG 568 / P 25</strain>
    </source>
</reference>
<comment type="similarity">
    <text evidence="1">Belongs to the DNA glycosylase MPG family.</text>
</comment>
<dbReference type="EC" id="3.2.2.-" evidence="1"/>
<dbReference type="EMBL" id="AE008922">
    <property type="protein sequence ID" value="AAM41594.1"/>
    <property type="molecule type" value="Genomic_DNA"/>
</dbReference>
<dbReference type="RefSeq" id="NP_637670.1">
    <property type="nucleotide sequence ID" value="NC_003902.1"/>
</dbReference>
<dbReference type="RefSeq" id="WP_011037459.1">
    <property type="nucleotide sequence ID" value="NC_003902.1"/>
</dbReference>
<dbReference type="SMR" id="Q8P8C7"/>
<dbReference type="STRING" id="190485.XCC2316"/>
<dbReference type="EnsemblBacteria" id="AAM41594">
    <property type="protein sequence ID" value="AAM41594"/>
    <property type="gene ID" value="XCC2316"/>
</dbReference>
<dbReference type="KEGG" id="xcc:XCC2316"/>
<dbReference type="PATRIC" id="fig|190485.4.peg.2466"/>
<dbReference type="eggNOG" id="COG2094">
    <property type="taxonomic scope" value="Bacteria"/>
</dbReference>
<dbReference type="HOGENOM" id="CLU_060471_3_2_6"/>
<dbReference type="OrthoDB" id="9794313at2"/>
<dbReference type="Proteomes" id="UP000001010">
    <property type="component" value="Chromosome"/>
</dbReference>
<dbReference type="GO" id="GO:0003905">
    <property type="term" value="F:alkylbase DNA N-glycosylase activity"/>
    <property type="evidence" value="ECO:0000318"/>
    <property type="project" value="GO_Central"/>
</dbReference>
<dbReference type="GO" id="GO:0003677">
    <property type="term" value="F:DNA binding"/>
    <property type="evidence" value="ECO:0007669"/>
    <property type="project" value="InterPro"/>
</dbReference>
<dbReference type="GO" id="GO:0006284">
    <property type="term" value="P:base-excision repair"/>
    <property type="evidence" value="ECO:0000318"/>
    <property type="project" value="GO_Central"/>
</dbReference>
<dbReference type="CDD" id="cd00540">
    <property type="entry name" value="AAG"/>
    <property type="match status" value="1"/>
</dbReference>
<dbReference type="FunFam" id="3.10.300.10:FF:000001">
    <property type="entry name" value="Putative 3-methyladenine DNA glycosylase"/>
    <property type="match status" value="1"/>
</dbReference>
<dbReference type="Gene3D" id="3.10.300.10">
    <property type="entry name" value="Methylpurine-DNA glycosylase (MPG)"/>
    <property type="match status" value="1"/>
</dbReference>
<dbReference type="HAMAP" id="MF_00527">
    <property type="entry name" value="3MGH"/>
    <property type="match status" value="1"/>
</dbReference>
<dbReference type="InterPro" id="IPR011034">
    <property type="entry name" value="Formyl_transferase-like_C_sf"/>
</dbReference>
<dbReference type="InterPro" id="IPR003180">
    <property type="entry name" value="MPG"/>
</dbReference>
<dbReference type="InterPro" id="IPR036995">
    <property type="entry name" value="MPG_sf"/>
</dbReference>
<dbReference type="NCBIfam" id="TIGR00567">
    <property type="entry name" value="3mg"/>
    <property type="match status" value="1"/>
</dbReference>
<dbReference type="NCBIfam" id="NF002003">
    <property type="entry name" value="PRK00802.1-3"/>
    <property type="match status" value="1"/>
</dbReference>
<dbReference type="PANTHER" id="PTHR10429">
    <property type="entry name" value="DNA-3-METHYLADENINE GLYCOSYLASE"/>
    <property type="match status" value="1"/>
</dbReference>
<dbReference type="PANTHER" id="PTHR10429:SF0">
    <property type="entry name" value="DNA-3-METHYLADENINE GLYCOSYLASE"/>
    <property type="match status" value="1"/>
</dbReference>
<dbReference type="Pfam" id="PF02245">
    <property type="entry name" value="Pur_DNA_glyco"/>
    <property type="match status" value="1"/>
</dbReference>
<dbReference type="SUPFAM" id="SSF50486">
    <property type="entry name" value="FMT C-terminal domain-like"/>
    <property type="match status" value="1"/>
</dbReference>
<keyword id="KW-0227">DNA damage</keyword>
<keyword id="KW-0234">DNA repair</keyword>
<keyword id="KW-0378">Hydrolase</keyword>
<keyword id="KW-1185">Reference proteome</keyword>
<sequence length="207" mass="21765">MSLHSPLPRAFYAADARTVAPLLLNKVLVSADGRRGRITEVEAYCGSEDAAAHSFRGMTPRTQVMFGAPGHLYVYFIYGMHWAINAVCGGAPGHAVLIRALEPLAGCDAMHAARGAAPFKSLTTGPGRLAQAFGVSAVDNGLDLTTGVARLWIEDDGTPPPAAPLAGPRIGIRKAVELPWRWVVPGSAYLSRPLPRVSGARASVTGD</sequence>
<feature type="chain" id="PRO_0000100116" description="Putative 3-methyladenine DNA glycosylase">
    <location>
        <begin position="1"/>
        <end position="207"/>
    </location>
</feature>
<gene>
    <name type="ordered locus">XCC2316</name>
</gene>